<accession>P68088</accession>
<accession>O47703</accession>
<accession>O47704</accession>
<feature type="chain" id="PRO_0000183780" description="Cytochrome c oxidase subunit 3">
    <location>
        <begin position="1"/>
        <end position="261"/>
    </location>
</feature>
<feature type="topological domain" description="Mitochondrial matrix" evidence="1">
    <location>
        <begin position="1"/>
        <end position="15"/>
    </location>
</feature>
<feature type="transmembrane region" description="Helical; Name=I" evidence="1">
    <location>
        <begin position="16"/>
        <end position="34"/>
    </location>
</feature>
<feature type="topological domain" description="Mitochondrial intermembrane" evidence="1">
    <location>
        <begin position="35"/>
        <end position="40"/>
    </location>
</feature>
<feature type="transmembrane region" description="Helical; Name=II" evidence="1">
    <location>
        <begin position="41"/>
        <end position="66"/>
    </location>
</feature>
<feature type="topological domain" description="Mitochondrial matrix" evidence="1">
    <location>
        <begin position="67"/>
        <end position="72"/>
    </location>
</feature>
<feature type="transmembrane region" description="Helical; Name=III" evidence="1">
    <location>
        <begin position="73"/>
        <end position="105"/>
    </location>
</feature>
<feature type="topological domain" description="Mitochondrial intermembrane" evidence="1">
    <location>
        <begin position="106"/>
        <end position="128"/>
    </location>
</feature>
<feature type="transmembrane region" description="Helical; Name=IV" evidence="1">
    <location>
        <begin position="129"/>
        <end position="152"/>
    </location>
</feature>
<feature type="topological domain" description="Mitochondrial matrix" evidence="1">
    <location>
        <begin position="153"/>
        <end position="155"/>
    </location>
</feature>
<feature type="transmembrane region" description="Helical; Name=V" evidence="1">
    <location>
        <begin position="156"/>
        <end position="183"/>
    </location>
</feature>
<feature type="topological domain" description="Mitochondrial intermembrane" evidence="1">
    <location>
        <begin position="184"/>
        <end position="190"/>
    </location>
</feature>
<feature type="transmembrane region" description="Helical; Name=VI" evidence="1">
    <location>
        <begin position="191"/>
        <end position="223"/>
    </location>
</feature>
<feature type="topological domain" description="Mitochondrial matrix" evidence="1">
    <location>
        <begin position="224"/>
        <end position="232"/>
    </location>
</feature>
<feature type="transmembrane region" description="Helical; Name=VII" evidence="1">
    <location>
        <begin position="233"/>
        <end position="256"/>
    </location>
</feature>
<feature type="topological domain" description="Mitochondrial intermembrane" evidence="1">
    <location>
        <begin position="257"/>
        <end position="261"/>
    </location>
</feature>
<protein>
    <recommendedName>
        <fullName>Cytochrome c oxidase subunit 3</fullName>
        <ecNumber>7.1.1.9</ecNumber>
    </recommendedName>
    <alternativeName>
        <fullName>Cytochrome c oxidase polypeptide III</fullName>
    </alternativeName>
</protein>
<evidence type="ECO:0000250" key="1">
    <source>
        <dbReference type="UniProtKB" id="P00415"/>
    </source>
</evidence>
<evidence type="ECO:0000250" key="2">
    <source>
        <dbReference type="UniProtKB" id="P00420"/>
    </source>
</evidence>
<evidence type="ECO:0000305" key="3"/>
<proteinExistence type="inferred from homology"/>
<comment type="function">
    <text evidence="2">Component of the cytochrome c oxidase, the last enzyme in the mitochondrial electron transport chain which drives oxidative phosphorylation. The respiratory chain contains 3 multisubunit complexes succinate dehydrogenase (complex II, CII), ubiquinol-cytochrome c oxidoreductase (cytochrome b-c1 complex, complex III, CIII) and cytochrome c oxidase (complex IV, CIV), that cooperate to transfer electrons derived from NADH and succinate to molecular oxygen, creating an electrochemical gradient over the inner membrane that drives transmembrane transport and the ATP synthase. Cytochrome c oxidase is the component of the respiratory chain that catalyzes the reduction of oxygen to water. Electrons originating from reduced cytochrome c in the intermembrane space (IMS) are transferred via the dinuclear copper A center (CU(A)) of subunit 2 and heme A of subunit 1 to the active site in subunit 1, a binuclear center (BNC) formed by heme A3 and copper B (CU(B)). The BNC reduces molecular oxygen to 2 water molecules using 4 electrons from cytochrome c in the IMS and 4 protons from the mitochondrial matrix.</text>
</comment>
<comment type="catalytic activity">
    <reaction evidence="2">
        <text>4 Fe(II)-[cytochrome c] + O2 + 8 H(+)(in) = 4 Fe(III)-[cytochrome c] + 2 H2O + 4 H(+)(out)</text>
        <dbReference type="Rhea" id="RHEA:11436"/>
        <dbReference type="Rhea" id="RHEA-COMP:10350"/>
        <dbReference type="Rhea" id="RHEA-COMP:14399"/>
        <dbReference type="ChEBI" id="CHEBI:15377"/>
        <dbReference type="ChEBI" id="CHEBI:15378"/>
        <dbReference type="ChEBI" id="CHEBI:15379"/>
        <dbReference type="ChEBI" id="CHEBI:29033"/>
        <dbReference type="ChEBI" id="CHEBI:29034"/>
        <dbReference type="EC" id="7.1.1.9"/>
    </reaction>
    <physiologicalReaction direction="left-to-right" evidence="2">
        <dbReference type="Rhea" id="RHEA:11437"/>
    </physiologicalReaction>
</comment>
<comment type="subunit">
    <text evidence="1">Component of the cytochrome c oxidase (complex IV, CIV), a multisubunit enzyme composed of 14 subunits. The complex is composed of a catalytic core of 3 subunits MT-CO1, MT-CO2 and MT-CO3, encoded in the mitochondrial DNA, and 11 supernumerary subunits COX4I, COX5A, COX5B, COX6A, COX6B, COX6C, COX7A, COX7B, COX7C, COX8 and NDUFA4, which are encoded in the nuclear genome. The complex exists as a monomer or a dimer and forms supercomplexes (SCs) in the inner mitochondrial membrane with NADH-ubiquinone oxidoreductase (complex I, CI) and ubiquinol-cytochrome c oxidoreductase (cytochrome b-c1 complex, complex III, CIII), resulting in different assemblies (supercomplex SCI(1)III(2)IV(1) and megacomplex MCI(2)III(2)IV(2)).</text>
</comment>
<comment type="subcellular location">
    <subcellularLocation>
        <location evidence="1">Mitochondrion inner membrane</location>
        <topology evidence="1">Multi-pass membrane protein</topology>
    </subcellularLocation>
</comment>
<comment type="similarity">
    <text evidence="3">Belongs to the cytochrome c oxidase subunit 3 family.</text>
</comment>
<name>COX3_NANGR</name>
<organism>
    <name type="scientific">Nanger granti</name>
    <name type="common">Grant's gazelle</name>
    <name type="synonym">Gazella granti</name>
    <dbReference type="NCBI Taxonomy" id="27591"/>
    <lineage>
        <taxon>Eukaryota</taxon>
        <taxon>Metazoa</taxon>
        <taxon>Chordata</taxon>
        <taxon>Craniata</taxon>
        <taxon>Vertebrata</taxon>
        <taxon>Euteleostomi</taxon>
        <taxon>Mammalia</taxon>
        <taxon>Eutheria</taxon>
        <taxon>Laurasiatheria</taxon>
        <taxon>Artiodactyla</taxon>
        <taxon>Ruminantia</taxon>
        <taxon>Pecora</taxon>
        <taxon>Bovidae</taxon>
        <taxon>Antilopinae</taxon>
        <taxon>Nanger</taxon>
    </lineage>
</organism>
<gene>
    <name type="primary">MT-CO3</name>
    <name type="synonym">COIII</name>
    <name type="synonym">COXIII</name>
    <name type="synonym">MTCO3</name>
</gene>
<reference key="1">
    <citation type="journal article" date="1999" name="Mol. Phylogenet. Evol.">
        <title>Phylogenetic relationships in the bovid subfamily Antilopinae based on mitochondrial DNA sequences.</title>
        <authorList>
            <person name="Rebholz W.E.R."/>
            <person name="Harley E.H."/>
        </authorList>
    </citation>
    <scope>NUCLEOTIDE SEQUENCE [GENOMIC DNA]</scope>
</reference>
<geneLocation type="mitochondrion"/>
<keyword id="KW-0472">Membrane</keyword>
<keyword id="KW-0496">Mitochondrion</keyword>
<keyword id="KW-0999">Mitochondrion inner membrane</keyword>
<keyword id="KW-1278">Translocase</keyword>
<keyword id="KW-0812">Transmembrane</keyword>
<keyword id="KW-1133">Transmembrane helix</keyword>
<sequence>MTHQTHAYHMVNPSPWPLTGALSALLMTSGLIMWFHFNSVALLMLGLTTNMLTMYQWWRDVIRESTFQGHHTPNVQKGLRYGMILFIISEVLFFTGFFWAFYHSSLAPTPELGGCWPPTGIHPLNPLEVPLLNTSVLLASGVSITWAHHSLMEGNRNHMLQALFITIALGVYFTLLQASEYYEAPFTISDGVYGSTFFVATGFHGLHVIIGSTFLIVCFFRQLKFHFTSSHHFGFEAAAWYWHFVDVVWLFLYVSIYWWGS</sequence>
<dbReference type="EC" id="7.1.1.9"/>
<dbReference type="EMBL" id="AF030468">
    <property type="protein sequence ID" value="AAB93607.1"/>
    <property type="molecule type" value="Genomic_DNA"/>
</dbReference>
<dbReference type="SMR" id="P68088"/>
<dbReference type="GO" id="GO:0005743">
    <property type="term" value="C:mitochondrial inner membrane"/>
    <property type="evidence" value="ECO:0007669"/>
    <property type="project" value="UniProtKB-SubCell"/>
</dbReference>
<dbReference type="GO" id="GO:0045277">
    <property type="term" value="C:respiratory chain complex IV"/>
    <property type="evidence" value="ECO:0000250"/>
    <property type="project" value="UniProtKB"/>
</dbReference>
<dbReference type="GO" id="GO:0004129">
    <property type="term" value="F:cytochrome-c oxidase activity"/>
    <property type="evidence" value="ECO:0007669"/>
    <property type="project" value="UniProtKB-EC"/>
</dbReference>
<dbReference type="GO" id="GO:0006123">
    <property type="term" value="P:mitochondrial electron transport, cytochrome c to oxygen"/>
    <property type="evidence" value="ECO:0007669"/>
    <property type="project" value="TreeGrafter"/>
</dbReference>
<dbReference type="GO" id="GO:0008535">
    <property type="term" value="P:respiratory chain complex IV assembly"/>
    <property type="evidence" value="ECO:0000250"/>
    <property type="project" value="UniProtKB"/>
</dbReference>
<dbReference type="CDD" id="cd01665">
    <property type="entry name" value="Cyt_c_Oxidase_III"/>
    <property type="match status" value="1"/>
</dbReference>
<dbReference type="FunFam" id="1.10.287.70:FF:000048">
    <property type="entry name" value="Cytochrome c oxidase subunit 3"/>
    <property type="match status" value="1"/>
</dbReference>
<dbReference type="FunFam" id="1.20.120.80:FF:000002">
    <property type="entry name" value="Cytochrome c oxidase subunit 3"/>
    <property type="match status" value="1"/>
</dbReference>
<dbReference type="Gene3D" id="1.10.287.70">
    <property type="match status" value="1"/>
</dbReference>
<dbReference type="Gene3D" id="1.20.120.80">
    <property type="entry name" value="Cytochrome c oxidase, subunit III, four-helix bundle"/>
    <property type="match status" value="1"/>
</dbReference>
<dbReference type="InterPro" id="IPR024791">
    <property type="entry name" value="Cyt_c/ubiquinol_Oxase_su3"/>
</dbReference>
<dbReference type="InterPro" id="IPR033945">
    <property type="entry name" value="Cyt_c_oxase_su3_dom"/>
</dbReference>
<dbReference type="InterPro" id="IPR000298">
    <property type="entry name" value="Cyt_c_oxidase-like_su3"/>
</dbReference>
<dbReference type="InterPro" id="IPR035973">
    <property type="entry name" value="Cyt_c_oxidase_su3-like_sf"/>
</dbReference>
<dbReference type="InterPro" id="IPR013833">
    <property type="entry name" value="Cyt_c_oxidase_su3_a-hlx"/>
</dbReference>
<dbReference type="PANTHER" id="PTHR11403:SF7">
    <property type="entry name" value="CYTOCHROME C OXIDASE SUBUNIT 3"/>
    <property type="match status" value="1"/>
</dbReference>
<dbReference type="PANTHER" id="PTHR11403">
    <property type="entry name" value="CYTOCHROME C OXIDASE SUBUNIT III"/>
    <property type="match status" value="1"/>
</dbReference>
<dbReference type="Pfam" id="PF00510">
    <property type="entry name" value="COX3"/>
    <property type="match status" value="1"/>
</dbReference>
<dbReference type="SUPFAM" id="SSF81452">
    <property type="entry name" value="Cytochrome c oxidase subunit III-like"/>
    <property type="match status" value="1"/>
</dbReference>
<dbReference type="PROSITE" id="PS50253">
    <property type="entry name" value="COX3"/>
    <property type="match status" value="1"/>
</dbReference>